<feature type="chain" id="PRO_0000146049" description="Phosphoglycerate kinase">
    <location>
        <begin position="1"/>
        <end position="415"/>
    </location>
</feature>
<feature type="binding site" evidence="1">
    <location>
        <begin position="28"/>
        <end position="30"/>
    </location>
    <ligand>
        <name>substrate</name>
    </ligand>
</feature>
<feature type="binding site" evidence="1">
    <location>
        <position position="44"/>
    </location>
    <ligand>
        <name>substrate</name>
    </ligand>
</feature>
<feature type="binding site" evidence="1">
    <location>
        <begin position="67"/>
        <end position="70"/>
    </location>
    <ligand>
        <name>substrate</name>
    </ligand>
</feature>
<feature type="binding site" evidence="1">
    <location>
        <position position="124"/>
    </location>
    <ligand>
        <name>substrate</name>
    </ligand>
</feature>
<feature type="binding site" evidence="1">
    <location>
        <position position="164"/>
    </location>
    <ligand>
        <name>substrate</name>
    </ligand>
</feature>
<feature type="binding site" evidence="1">
    <location>
        <position position="336"/>
    </location>
    <ligand>
        <name>ATP</name>
        <dbReference type="ChEBI" id="CHEBI:30616"/>
    </ligand>
</feature>
<feature type="binding site" evidence="1">
    <location>
        <begin position="362"/>
        <end position="365"/>
    </location>
    <ligand>
        <name>ATP</name>
        <dbReference type="ChEBI" id="CHEBI:30616"/>
    </ligand>
</feature>
<comment type="catalytic activity">
    <reaction>
        <text>(2R)-3-phosphoglycerate + ATP = (2R)-3-phospho-glyceroyl phosphate + ADP</text>
        <dbReference type="Rhea" id="RHEA:14801"/>
        <dbReference type="ChEBI" id="CHEBI:30616"/>
        <dbReference type="ChEBI" id="CHEBI:57604"/>
        <dbReference type="ChEBI" id="CHEBI:58272"/>
        <dbReference type="ChEBI" id="CHEBI:456216"/>
        <dbReference type="EC" id="2.7.2.3"/>
    </reaction>
</comment>
<comment type="pathway">
    <text>Carbohydrate degradation; glycolysis; pyruvate from D-glyceraldehyde 3-phosphate: step 2/5.</text>
</comment>
<comment type="subcellular location">
    <subcellularLocation>
        <location evidence="2">Cytoplasm</location>
    </subcellularLocation>
</comment>
<comment type="similarity">
    <text evidence="2">Belongs to the phosphoglycerate kinase family.</text>
</comment>
<keyword id="KW-0067">ATP-binding</keyword>
<keyword id="KW-0963">Cytoplasm</keyword>
<keyword id="KW-0324">Glycolysis</keyword>
<keyword id="KW-0418">Kinase</keyword>
<keyword id="KW-0547">Nucleotide-binding</keyword>
<keyword id="KW-1185">Reference proteome</keyword>
<keyword id="KW-0808">Transferase</keyword>
<organism>
    <name type="scientific">Aeropyrum pernix (strain ATCC 700893 / DSM 11879 / JCM 9820 / NBRC 100138 / K1)</name>
    <dbReference type="NCBI Taxonomy" id="272557"/>
    <lineage>
        <taxon>Archaea</taxon>
        <taxon>Thermoproteota</taxon>
        <taxon>Thermoprotei</taxon>
        <taxon>Desulfurococcales</taxon>
        <taxon>Desulfurococcaceae</taxon>
        <taxon>Aeropyrum</taxon>
    </lineage>
</organism>
<reference key="1">
    <citation type="journal article" date="1999" name="DNA Res.">
        <title>Complete genome sequence of an aerobic hyper-thermophilic crenarchaeon, Aeropyrum pernix K1.</title>
        <authorList>
            <person name="Kawarabayasi Y."/>
            <person name="Hino Y."/>
            <person name="Horikawa H."/>
            <person name="Yamazaki S."/>
            <person name="Haikawa Y."/>
            <person name="Jin-no K."/>
            <person name="Takahashi M."/>
            <person name="Sekine M."/>
            <person name="Baba S."/>
            <person name="Ankai A."/>
            <person name="Kosugi H."/>
            <person name="Hosoyama A."/>
            <person name="Fukui S."/>
            <person name="Nagai Y."/>
            <person name="Nishijima K."/>
            <person name="Nakazawa H."/>
            <person name="Takamiya M."/>
            <person name="Masuda S."/>
            <person name="Funahashi T."/>
            <person name="Tanaka T."/>
            <person name="Kudoh Y."/>
            <person name="Yamazaki J."/>
            <person name="Kushida N."/>
            <person name="Oguchi A."/>
            <person name="Aoki K."/>
            <person name="Kubota K."/>
            <person name="Nakamura Y."/>
            <person name="Nomura N."/>
            <person name="Sako Y."/>
            <person name="Kikuchi H."/>
        </authorList>
    </citation>
    <scope>NUCLEOTIDE SEQUENCE [LARGE SCALE GENOMIC DNA]</scope>
    <source>
        <strain>ATCC 700893 / DSM 11879 / JCM 9820 / NBRC 100138 / K1</strain>
    </source>
</reference>
<accession>Q9YFS7</accession>
<gene>
    <name type="primary">pgk</name>
    <name type="ordered locus">APE_0173.1</name>
</gene>
<sequence>MPLEYMGGRLATLDDVDVRGKKVIVRFDLNSPVGNGGEILDDSRIAEAAGTLRELCDRGAAVVALSHQGRPLESDFVSLERHASLLSRYSGVEVRFVMDVIGPEALRTVASLRPGEAVLLDNTRIISEDFIEAEGTVHARGIMVTRLSKLANMYVNEAFSASHRSQASIVGFPYVLPSAGGRVLEKEIRSLNRAVSSGERPKVVVLGGAKLKDAVRIVDYLSSSGVADEVLTTGLVGLLFLYARGYRLPRDVTKLLEKKGGEEAIAKARRIVEEGRRVRTPIDFVVEVGDKIYIKPADELTEGVPKDIGPSTVEYFRAKMRGARVIVMRGPAGVIEDPRFRRGTVELVKAALSSGAYTVFGGGHFRAILRDLPEHLSSKVGHLSTGGGALLYYLSGRPLPGVKALVDSARIFNLV</sequence>
<dbReference type="EC" id="2.7.2.3"/>
<dbReference type="EMBL" id="BA000002">
    <property type="protein sequence ID" value="BAA79084.2"/>
    <property type="molecule type" value="Genomic_DNA"/>
</dbReference>
<dbReference type="PIR" id="B72773">
    <property type="entry name" value="B72773"/>
</dbReference>
<dbReference type="RefSeq" id="WP_010865545.1">
    <property type="nucleotide sequence ID" value="NC_000854.2"/>
</dbReference>
<dbReference type="SMR" id="Q9YFS7"/>
<dbReference type="STRING" id="272557.APE_0173.1"/>
<dbReference type="EnsemblBacteria" id="BAA79084">
    <property type="protein sequence ID" value="BAA79084"/>
    <property type="gene ID" value="APE_0173.1"/>
</dbReference>
<dbReference type="GeneID" id="1445702"/>
<dbReference type="KEGG" id="ape:APE_0173.1"/>
<dbReference type="PATRIC" id="fig|272557.25.peg.123"/>
<dbReference type="eggNOG" id="arCOG00496">
    <property type="taxonomic scope" value="Archaea"/>
</dbReference>
<dbReference type="UniPathway" id="UPA00109">
    <property type="reaction ID" value="UER00185"/>
</dbReference>
<dbReference type="Proteomes" id="UP000002518">
    <property type="component" value="Chromosome"/>
</dbReference>
<dbReference type="GO" id="GO:0005829">
    <property type="term" value="C:cytosol"/>
    <property type="evidence" value="ECO:0007669"/>
    <property type="project" value="TreeGrafter"/>
</dbReference>
<dbReference type="GO" id="GO:0043531">
    <property type="term" value="F:ADP binding"/>
    <property type="evidence" value="ECO:0007669"/>
    <property type="project" value="TreeGrafter"/>
</dbReference>
<dbReference type="GO" id="GO:0005524">
    <property type="term" value="F:ATP binding"/>
    <property type="evidence" value="ECO:0007669"/>
    <property type="project" value="UniProtKB-KW"/>
</dbReference>
<dbReference type="GO" id="GO:0004618">
    <property type="term" value="F:phosphoglycerate kinase activity"/>
    <property type="evidence" value="ECO:0007669"/>
    <property type="project" value="UniProtKB-UniRule"/>
</dbReference>
<dbReference type="GO" id="GO:0006094">
    <property type="term" value="P:gluconeogenesis"/>
    <property type="evidence" value="ECO:0007669"/>
    <property type="project" value="TreeGrafter"/>
</dbReference>
<dbReference type="GO" id="GO:0006096">
    <property type="term" value="P:glycolytic process"/>
    <property type="evidence" value="ECO:0007669"/>
    <property type="project" value="UniProtKB-UniRule"/>
</dbReference>
<dbReference type="FunFam" id="3.40.50.1260:FF:000006">
    <property type="entry name" value="Phosphoglycerate kinase"/>
    <property type="match status" value="1"/>
</dbReference>
<dbReference type="Gene3D" id="3.40.50.1260">
    <property type="entry name" value="Phosphoglycerate kinase, N-terminal domain"/>
    <property type="match status" value="2"/>
</dbReference>
<dbReference type="HAMAP" id="MF_00145">
    <property type="entry name" value="Phosphoglyc_kinase"/>
    <property type="match status" value="1"/>
</dbReference>
<dbReference type="InterPro" id="IPR001576">
    <property type="entry name" value="Phosphoglycerate_kinase"/>
</dbReference>
<dbReference type="InterPro" id="IPR015911">
    <property type="entry name" value="Phosphoglycerate_kinase_CS"/>
</dbReference>
<dbReference type="InterPro" id="IPR015824">
    <property type="entry name" value="Phosphoglycerate_kinase_N"/>
</dbReference>
<dbReference type="InterPro" id="IPR036043">
    <property type="entry name" value="Phosphoglycerate_kinase_sf"/>
</dbReference>
<dbReference type="PANTHER" id="PTHR11406">
    <property type="entry name" value="PHOSPHOGLYCERATE KINASE"/>
    <property type="match status" value="1"/>
</dbReference>
<dbReference type="PANTHER" id="PTHR11406:SF23">
    <property type="entry name" value="PHOSPHOGLYCERATE KINASE 1, CHLOROPLASTIC-RELATED"/>
    <property type="match status" value="1"/>
</dbReference>
<dbReference type="Pfam" id="PF00162">
    <property type="entry name" value="PGK"/>
    <property type="match status" value="1"/>
</dbReference>
<dbReference type="PIRSF" id="PIRSF000724">
    <property type="entry name" value="Pgk"/>
    <property type="match status" value="1"/>
</dbReference>
<dbReference type="PRINTS" id="PR00477">
    <property type="entry name" value="PHGLYCKINASE"/>
</dbReference>
<dbReference type="SUPFAM" id="SSF53748">
    <property type="entry name" value="Phosphoglycerate kinase"/>
    <property type="match status" value="1"/>
</dbReference>
<dbReference type="PROSITE" id="PS00111">
    <property type="entry name" value="PGLYCERATE_KINASE"/>
    <property type="match status" value="1"/>
</dbReference>
<evidence type="ECO:0000250" key="1"/>
<evidence type="ECO:0000305" key="2"/>
<proteinExistence type="inferred from homology"/>
<name>PGK_AERPE</name>
<protein>
    <recommendedName>
        <fullName>Phosphoglycerate kinase</fullName>
        <ecNumber>2.7.2.3</ecNumber>
    </recommendedName>
</protein>